<gene>
    <name type="primary">SLU7</name>
    <name type="ordered locus">AGR159C</name>
</gene>
<protein>
    <recommendedName>
        <fullName>Pre-mRNA-splicing factor SLU7</fullName>
    </recommendedName>
</protein>
<keyword id="KW-0479">Metal-binding</keyword>
<keyword id="KW-0507">mRNA processing</keyword>
<keyword id="KW-0508">mRNA splicing</keyword>
<keyword id="KW-0539">Nucleus</keyword>
<keyword id="KW-1185">Reference proteome</keyword>
<keyword id="KW-0747">Spliceosome</keyword>
<keyword id="KW-0862">Zinc</keyword>
<keyword id="KW-0863">Zinc-finger</keyword>
<sequence length="266" mass="28924">MEENKHIPKYIRDKPWYVESGDDDADYLGHHRREPGEGAQDFSVAQQGSVISDRFVAGSAPRAGRGRGRCTNCGANHDRRDCLLRPRKQARGDGGERAFQVRDENALSFEAKRDRWYGFEGPVAPAVAAAAAEPPAAAEDAAAAVERYKLGLDARAARAGVGAPAIRPRHDRARYLDDVRGEETRYDPKSRVYRGDGAAGEAPAAPDRAGRDGSTVDHVISANPTRLELGRQTPERGARQPEGQAQSAAARASLLQRYGNSARSRR</sequence>
<dbReference type="EMBL" id="AE016820">
    <property type="protein sequence ID" value="AAS54649.1"/>
    <property type="molecule type" value="Genomic_DNA"/>
</dbReference>
<dbReference type="RefSeq" id="NP_986825.1">
    <property type="nucleotide sequence ID" value="NM_211887.1"/>
</dbReference>
<dbReference type="FunCoup" id="Q74ZN9">
    <property type="interactions" value="551"/>
</dbReference>
<dbReference type="STRING" id="284811.Q74ZN9"/>
<dbReference type="EnsemblFungi" id="AAS54649">
    <property type="protein sequence ID" value="AAS54649"/>
    <property type="gene ID" value="AGOS_AGR159C"/>
</dbReference>
<dbReference type="GeneID" id="4623127"/>
<dbReference type="KEGG" id="ago:AGOS_AGR159C"/>
<dbReference type="eggNOG" id="KOG2560">
    <property type="taxonomic scope" value="Eukaryota"/>
</dbReference>
<dbReference type="HOGENOM" id="CLU_072877_0_0_1"/>
<dbReference type="InParanoid" id="Q74ZN9"/>
<dbReference type="OrthoDB" id="249612at2759"/>
<dbReference type="Proteomes" id="UP000000591">
    <property type="component" value="Chromosome VII"/>
</dbReference>
<dbReference type="GO" id="GO:0005681">
    <property type="term" value="C:spliceosomal complex"/>
    <property type="evidence" value="ECO:0007669"/>
    <property type="project" value="UniProtKB-KW"/>
</dbReference>
<dbReference type="GO" id="GO:0030628">
    <property type="term" value="F:pre-mRNA 3'-splice site binding"/>
    <property type="evidence" value="ECO:0007669"/>
    <property type="project" value="InterPro"/>
</dbReference>
<dbReference type="GO" id="GO:0008270">
    <property type="term" value="F:zinc ion binding"/>
    <property type="evidence" value="ECO:0007669"/>
    <property type="project" value="UniProtKB-KW"/>
</dbReference>
<dbReference type="GO" id="GO:0000398">
    <property type="term" value="P:mRNA splicing, via spliceosome"/>
    <property type="evidence" value="ECO:0007669"/>
    <property type="project" value="InterPro"/>
</dbReference>
<dbReference type="InterPro" id="IPR039974">
    <property type="entry name" value="Splicing_factor_SLU7"/>
</dbReference>
<dbReference type="PANTHER" id="PTHR12942:SF2">
    <property type="entry name" value="PRE-MRNA-SPLICING FACTOR SLU7"/>
    <property type="match status" value="1"/>
</dbReference>
<dbReference type="PANTHER" id="PTHR12942">
    <property type="entry name" value="STEP II SPLICING FACTOR SLU7"/>
    <property type="match status" value="1"/>
</dbReference>
<feature type="chain" id="PRO_0000218542" description="Pre-mRNA-splicing factor SLU7">
    <location>
        <begin position="1"/>
        <end position="266"/>
    </location>
</feature>
<feature type="zinc finger region" description="CCHC-type">
    <location>
        <begin position="68"/>
        <end position="84"/>
    </location>
</feature>
<feature type="region of interest" description="Disordered" evidence="2">
    <location>
        <begin position="160"/>
        <end position="266"/>
    </location>
</feature>
<feature type="compositionally biased region" description="Basic and acidic residues" evidence="2">
    <location>
        <begin position="173"/>
        <end position="194"/>
    </location>
</feature>
<feature type="compositionally biased region" description="Low complexity" evidence="2">
    <location>
        <begin position="195"/>
        <end position="207"/>
    </location>
</feature>
<feature type="compositionally biased region" description="Low complexity" evidence="2">
    <location>
        <begin position="244"/>
        <end position="257"/>
    </location>
</feature>
<proteinExistence type="inferred from homology"/>
<name>SLU7_EREGS</name>
<accession>Q74ZN9</accession>
<evidence type="ECO:0000250" key="1"/>
<evidence type="ECO:0000256" key="2">
    <source>
        <dbReference type="SAM" id="MobiDB-lite"/>
    </source>
</evidence>
<evidence type="ECO:0000305" key="3"/>
<reference key="1">
    <citation type="journal article" date="2004" name="Science">
        <title>The Ashbya gossypii genome as a tool for mapping the ancient Saccharomyces cerevisiae genome.</title>
        <authorList>
            <person name="Dietrich F.S."/>
            <person name="Voegeli S."/>
            <person name="Brachat S."/>
            <person name="Lerch A."/>
            <person name="Gates K."/>
            <person name="Steiner S."/>
            <person name="Mohr C."/>
            <person name="Poehlmann R."/>
            <person name="Luedi P."/>
            <person name="Choi S."/>
            <person name="Wing R.A."/>
            <person name="Flavier A."/>
            <person name="Gaffney T.D."/>
            <person name="Philippsen P."/>
        </authorList>
    </citation>
    <scope>NUCLEOTIDE SEQUENCE [LARGE SCALE GENOMIC DNA]</scope>
    <source>
        <strain>ATCC 10895 / CBS 109.51 / FGSC 9923 / NRRL Y-1056</strain>
    </source>
</reference>
<reference key="2">
    <citation type="journal article" date="2013" name="G3 (Bethesda)">
        <title>Genomes of Ashbya fungi isolated from insects reveal four mating-type loci, numerous translocations, lack of transposons, and distinct gene duplications.</title>
        <authorList>
            <person name="Dietrich F.S."/>
            <person name="Voegeli S."/>
            <person name="Kuo S."/>
            <person name="Philippsen P."/>
        </authorList>
    </citation>
    <scope>GENOME REANNOTATION</scope>
    <source>
        <strain>ATCC 10895 / CBS 109.51 / FGSC 9923 / NRRL Y-1056</strain>
    </source>
</reference>
<comment type="function">
    <text evidence="1">Involved in pre-mRNA splicing.</text>
</comment>
<comment type="subunit">
    <text evidence="1">Associated with the spliceosome.</text>
</comment>
<comment type="subcellular location">
    <subcellularLocation>
        <location evidence="1">Nucleus</location>
    </subcellularLocation>
</comment>
<comment type="similarity">
    <text evidence="3">Belongs to the SLU7 family.</text>
</comment>
<organism>
    <name type="scientific">Eremothecium gossypii (strain ATCC 10895 / CBS 109.51 / FGSC 9923 / NRRL Y-1056)</name>
    <name type="common">Yeast</name>
    <name type="synonym">Ashbya gossypii</name>
    <dbReference type="NCBI Taxonomy" id="284811"/>
    <lineage>
        <taxon>Eukaryota</taxon>
        <taxon>Fungi</taxon>
        <taxon>Dikarya</taxon>
        <taxon>Ascomycota</taxon>
        <taxon>Saccharomycotina</taxon>
        <taxon>Saccharomycetes</taxon>
        <taxon>Saccharomycetales</taxon>
        <taxon>Saccharomycetaceae</taxon>
        <taxon>Eremothecium</taxon>
    </lineage>
</organism>